<protein>
    <recommendedName>
        <fullName evidence="1">Small ribosomal subunit protein uS7</fullName>
    </recommendedName>
    <alternativeName>
        <fullName evidence="2">30S ribosomal protein S7</fullName>
    </alternativeName>
</protein>
<sequence length="156" mass="17686">MPRRREVPKREVLPDPKYGNVDVAKFMNMLMLSGKKSVAERIVYGAFEQIQTKGGKDPLEVFTVALNNVKPVVEVKSRRVGGANYQVPVEVRPSRRMALAMRWLREAAKKRSEKSMALRLAGELSEAAEGRGGAMKKRDEVHRMAEANRAFSHFRF</sequence>
<gene>
    <name evidence="1" type="primary">rpsG</name>
    <name type="ordered locus">Bmul_0245</name>
    <name type="ordered locus">BMULJ_03009</name>
</gene>
<keyword id="KW-1185">Reference proteome</keyword>
<keyword id="KW-0687">Ribonucleoprotein</keyword>
<keyword id="KW-0689">Ribosomal protein</keyword>
<keyword id="KW-0694">RNA-binding</keyword>
<keyword id="KW-0699">rRNA-binding</keyword>
<keyword id="KW-0820">tRNA-binding</keyword>
<accession>A9ADI9</accession>
<proteinExistence type="inferred from homology"/>
<organism>
    <name type="scientific">Burkholderia multivorans (strain ATCC 17616 / 249)</name>
    <dbReference type="NCBI Taxonomy" id="395019"/>
    <lineage>
        <taxon>Bacteria</taxon>
        <taxon>Pseudomonadati</taxon>
        <taxon>Pseudomonadota</taxon>
        <taxon>Betaproteobacteria</taxon>
        <taxon>Burkholderiales</taxon>
        <taxon>Burkholderiaceae</taxon>
        <taxon>Burkholderia</taxon>
        <taxon>Burkholderia cepacia complex</taxon>
    </lineage>
</organism>
<comment type="function">
    <text evidence="1">One of the primary rRNA binding proteins, it binds directly to 16S rRNA where it nucleates assembly of the head domain of the 30S subunit. Is located at the subunit interface close to the decoding center, probably blocks exit of the E-site tRNA.</text>
</comment>
<comment type="subunit">
    <text evidence="1">Part of the 30S ribosomal subunit. Contacts proteins S9 and S11.</text>
</comment>
<comment type="similarity">
    <text evidence="1">Belongs to the universal ribosomal protein uS7 family.</text>
</comment>
<reference key="1">
    <citation type="submission" date="2007-10" db="EMBL/GenBank/DDBJ databases">
        <title>Complete sequence of chromosome 1 of Burkholderia multivorans ATCC 17616.</title>
        <authorList>
            <person name="Copeland A."/>
            <person name="Lucas S."/>
            <person name="Lapidus A."/>
            <person name="Barry K."/>
            <person name="Glavina del Rio T."/>
            <person name="Dalin E."/>
            <person name="Tice H."/>
            <person name="Pitluck S."/>
            <person name="Chain P."/>
            <person name="Malfatti S."/>
            <person name="Shin M."/>
            <person name="Vergez L."/>
            <person name="Schmutz J."/>
            <person name="Larimer F."/>
            <person name="Land M."/>
            <person name="Hauser L."/>
            <person name="Kyrpides N."/>
            <person name="Kim E."/>
            <person name="Tiedje J."/>
            <person name="Richardson P."/>
        </authorList>
    </citation>
    <scope>NUCLEOTIDE SEQUENCE [LARGE SCALE GENOMIC DNA]</scope>
    <source>
        <strain>ATCC 17616 / 249</strain>
    </source>
</reference>
<reference key="2">
    <citation type="submission" date="2007-04" db="EMBL/GenBank/DDBJ databases">
        <title>Complete genome sequence of Burkholderia multivorans ATCC 17616.</title>
        <authorList>
            <person name="Ohtsubo Y."/>
            <person name="Yamashita A."/>
            <person name="Kurokawa K."/>
            <person name="Takami H."/>
            <person name="Yuhara S."/>
            <person name="Nishiyama E."/>
            <person name="Endo R."/>
            <person name="Miyazaki R."/>
            <person name="Ono A."/>
            <person name="Yano K."/>
            <person name="Ito M."/>
            <person name="Sota M."/>
            <person name="Yuji N."/>
            <person name="Hattori M."/>
            <person name="Tsuda M."/>
        </authorList>
    </citation>
    <scope>NUCLEOTIDE SEQUENCE [LARGE SCALE GENOMIC DNA]</scope>
    <source>
        <strain>ATCC 17616 / 249</strain>
    </source>
</reference>
<dbReference type="EMBL" id="CP000868">
    <property type="protein sequence ID" value="ABX13940.1"/>
    <property type="molecule type" value="Genomic_DNA"/>
</dbReference>
<dbReference type="EMBL" id="AP009385">
    <property type="protein sequence ID" value="BAG44894.1"/>
    <property type="molecule type" value="Genomic_DNA"/>
</dbReference>
<dbReference type="RefSeq" id="WP_004198359.1">
    <property type="nucleotide sequence ID" value="NC_010804.1"/>
</dbReference>
<dbReference type="SMR" id="A9ADI9"/>
<dbReference type="STRING" id="395019.BMULJ_03009"/>
<dbReference type="GeneID" id="93171021"/>
<dbReference type="KEGG" id="bmj:BMULJ_03009"/>
<dbReference type="KEGG" id="bmu:Bmul_0245"/>
<dbReference type="eggNOG" id="COG0049">
    <property type="taxonomic scope" value="Bacteria"/>
</dbReference>
<dbReference type="HOGENOM" id="CLU_072226_1_1_4"/>
<dbReference type="Proteomes" id="UP000008815">
    <property type="component" value="Chromosome 1"/>
</dbReference>
<dbReference type="GO" id="GO:0015935">
    <property type="term" value="C:small ribosomal subunit"/>
    <property type="evidence" value="ECO:0007669"/>
    <property type="project" value="InterPro"/>
</dbReference>
<dbReference type="GO" id="GO:0019843">
    <property type="term" value="F:rRNA binding"/>
    <property type="evidence" value="ECO:0007669"/>
    <property type="project" value="UniProtKB-UniRule"/>
</dbReference>
<dbReference type="GO" id="GO:0003735">
    <property type="term" value="F:structural constituent of ribosome"/>
    <property type="evidence" value="ECO:0007669"/>
    <property type="project" value="InterPro"/>
</dbReference>
<dbReference type="GO" id="GO:0000049">
    <property type="term" value="F:tRNA binding"/>
    <property type="evidence" value="ECO:0007669"/>
    <property type="project" value="UniProtKB-UniRule"/>
</dbReference>
<dbReference type="GO" id="GO:0006412">
    <property type="term" value="P:translation"/>
    <property type="evidence" value="ECO:0007669"/>
    <property type="project" value="UniProtKB-UniRule"/>
</dbReference>
<dbReference type="CDD" id="cd14869">
    <property type="entry name" value="uS7_Bacteria"/>
    <property type="match status" value="1"/>
</dbReference>
<dbReference type="FunFam" id="1.10.455.10:FF:000001">
    <property type="entry name" value="30S ribosomal protein S7"/>
    <property type="match status" value="1"/>
</dbReference>
<dbReference type="Gene3D" id="1.10.455.10">
    <property type="entry name" value="Ribosomal protein S7 domain"/>
    <property type="match status" value="1"/>
</dbReference>
<dbReference type="HAMAP" id="MF_00480_B">
    <property type="entry name" value="Ribosomal_uS7_B"/>
    <property type="match status" value="1"/>
</dbReference>
<dbReference type="InterPro" id="IPR000235">
    <property type="entry name" value="Ribosomal_uS7"/>
</dbReference>
<dbReference type="InterPro" id="IPR005717">
    <property type="entry name" value="Ribosomal_uS7_bac/org-type"/>
</dbReference>
<dbReference type="InterPro" id="IPR020606">
    <property type="entry name" value="Ribosomal_uS7_CS"/>
</dbReference>
<dbReference type="InterPro" id="IPR023798">
    <property type="entry name" value="Ribosomal_uS7_dom"/>
</dbReference>
<dbReference type="InterPro" id="IPR036823">
    <property type="entry name" value="Ribosomal_uS7_dom_sf"/>
</dbReference>
<dbReference type="NCBIfam" id="TIGR01029">
    <property type="entry name" value="rpsG_bact"/>
    <property type="match status" value="1"/>
</dbReference>
<dbReference type="PANTHER" id="PTHR11205">
    <property type="entry name" value="RIBOSOMAL PROTEIN S7"/>
    <property type="match status" value="1"/>
</dbReference>
<dbReference type="Pfam" id="PF00177">
    <property type="entry name" value="Ribosomal_S7"/>
    <property type="match status" value="1"/>
</dbReference>
<dbReference type="PIRSF" id="PIRSF002122">
    <property type="entry name" value="RPS7p_RPS7a_RPS5e_RPS7o"/>
    <property type="match status" value="1"/>
</dbReference>
<dbReference type="SUPFAM" id="SSF47973">
    <property type="entry name" value="Ribosomal protein S7"/>
    <property type="match status" value="1"/>
</dbReference>
<dbReference type="PROSITE" id="PS00052">
    <property type="entry name" value="RIBOSOMAL_S7"/>
    <property type="match status" value="1"/>
</dbReference>
<name>RS7_BURM1</name>
<feature type="chain" id="PRO_1000125908" description="Small ribosomal subunit protein uS7">
    <location>
        <begin position="1"/>
        <end position="156"/>
    </location>
</feature>
<evidence type="ECO:0000255" key="1">
    <source>
        <dbReference type="HAMAP-Rule" id="MF_00480"/>
    </source>
</evidence>
<evidence type="ECO:0000305" key="2"/>